<comment type="function">
    <text evidence="1">The RecF protein is involved in DNA metabolism; it is required for DNA replication and normal SOS inducibility. RecF binds preferentially to single-stranded, linear DNA. It also seems to bind ATP.</text>
</comment>
<comment type="subcellular location">
    <subcellularLocation>
        <location evidence="1">Cytoplasm</location>
    </subcellularLocation>
</comment>
<comment type="similarity">
    <text evidence="1">Belongs to the RecF family.</text>
</comment>
<accession>B8GSS3</accession>
<proteinExistence type="inferred from homology"/>
<feature type="chain" id="PRO_1000133708" description="DNA replication and repair protein RecF">
    <location>
        <begin position="1"/>
        <end position="360"/>
    </location>
</feature>
<feature type="binding site" evidence="1">
    <location>
        <begin position="30"/>
        <end position="37"/>
    </location>
    <ligand>
        <name>ATP</name>
        <dbReference type="ChEBI" id="CHEBI:30616"/>
    </ligand>
</feature>
<evidence type="ECO:0000255" key="1">
    <source>
        <dbReference type="HAMAP-Rule" id="MF_00365"/>
    </source>
</evidence>
<keyword id="KW-0067">ATP-binding</keyword>
<keyword id="KW-0963">Cytoplasm</keyword>
<keyword id="KW-0227">DNA damage</keyword>
<keyword id="KW-0234">DNA repair</keyword>
<keyword id="KW-0235">DNA replication</keyword>
<keyword id="KW-0238">DNA-binding</keyword>
<keyword id="KW-0547">Nucleotide-binding</keyword>
<keyword id="KW-1185">Reference proteome</keyword>
<keyword id="KW-0742">SOS response</keyword>
<gene>
    <name evidence="1" type="primary">recF</name>
    <name type="ordered locus">Tgr7_0003</name>
</gene>
<reference key="1">
    <citation type="journal article" date="2011" name="Stand. Genomic Sci.">
        <title>Complete genome sequence of 'Thioalkalivibrio sulfidophilus' HL-EbGr7.</title>
        <authorList>
            <person name="Muyzer G."/>
            <person name="Sorokin D.Y."/>
            <person name="Mavromatis K."/>
            <person name="Lapidus A."/>
            <person name="Clum A."/>
            <person name="Ivanova N."/>
            <person name="Pati A."/>
            <person name="d'Haeseleer P."/>
            <person name="Woyke T."/>
            <person name="Kyrpides N.C."/>
        </authorList>
    </citation>
    <scope>NUCLEOTIDE SEQUENCE [LARGE SCALE GENOMIC DNA]</scope>
    <source>
        <strain>HL-EbGR7</strain>
    </source>
</reference>
<organism>
    <name type="scientific">Thioalkalivibrio sulfidiphilus (strain HL-EbGR7)</name>
    <dbReference type="NCBI Taxonomy" id="396588"/>
    <lineage>
        <taxon>Bacteria</taxon>
        <taxon>Pseudomonadati</taxon>
        <taxon>Pseudomonadota</taxon>
        <taxon>Gammaproteobacteria</taxon>
        <taxon>Chromatiales</taxon>
        <taxon>Ectothiorhodospiraceae</taxon>
        <taxon>Thioalkalivibrio</taxon>
    </lineage>
</organism>
<name>RECF_THISH</name>
<protein>
    <recommendedName>
        <fullName evidence="1">DNA replication and repair protein RecF</fullName>
    </recommendedName>
</protein>
<sequence>MILNRLEVRGLRILRHVRMDPVSGLNLVHGVNGAGKTSLLEAIHLLSTGHSFRTRQLSPLLAPDCDAVEVVARIQSTGGGEPWPVGIRKTRDSTTARIRGENVRSLADLARLLPLQVMHPESHLLVSGGPGYRRAFLDWGCFHTDPAYHDHWRRYRHLLCQRNAALRDRSPARLLSAWDTALGEAGSALDLARATHLQTLLPYLDSLKQELPETSGLALEYRRGWNPEESLSESLAHSVQRDRSAGFTQVGPHRAELLCRLDGRPVAQVASRGQQKSVVLMLKMAQSLWLMETLGFPPVVLVDDLPAELDARHRGWLMNCLQGLGSQVFVTAIESDQVPLSGWDSWQMFHVEHGTLRVGD</sequence>
<dbReference type="EMBL" id="CP001339">
    <property type="protein sequence ID" value="ACL71108.1"/>
    <property type="molecule type" value="Genomic_DNA"/>
</dbReference>
<dbReference type="RefSeq" id="WP_012636597.1">
    <property type="nucleotide sequence ID" value="NC_011901.1"/>
</dbReference>
<dbReference type="SMR" id="B8GSS3"/>
<dbReference type="STRING" id="396588.Tgr7_0003"/>
<dbReference type="KEGG" id="tgr:Tgr7_0003"/>
<dbReference type="eggNOG" id="COG1195">
    <property type="taxonomic scope" value="Bacteria"/>
</dbReference>
<dbReference type="HOGENOM" id="CLU_040267_0_0_6"/>
<dbReference type="OrthoDB" id="9803889at2"/>
<dbReference type="Proteomes" id="UP000002383">
    <property type="component" value="Chromosome"/>
</dbReference>
<dbReference type="GO" id="GO:0005737">
    <property type="term" value="C:cytoplasm"/>
    <property type="evidence" value="ECO:0007669"/>
    <property type="project" value="UniProtKB-SubCell"/>
</dbReference>
<dbReference type="GO" id="GO:0005524">
    <property type="term" value="F:ATP binding"/>
    <property type="evidence" value="ECO:0007669"/>
    <property type="project" value="UniProtKB-UniRule"/>
</dbReference>
<dbReference type="GO" id="GO:0003697">
    <property type="term" value="F:single-stranded DNA binding"/>
    <property type="evidence" value="ECO:0007669"/>
    <property type="project" value="UniProtKB-UniRule"/>
</dbReference>
<dbReference type="GO" id="GO:0006260">
    <property type="term" value="P:DNA replication"/>
    <property type="evidence" value="ECO:0007669"/>
    <property type="project" value="UniProtKB-UniRule"/>
</dbReference>
<dbReference type="GO" id="GO:0000731">
    <property type="term" value="P:DNA synthesis involved in DNA repair"/>
    <property type="evidence" value="ECO:0007669"/>
    <property type="project" value="TreeGrafter"/>
</dbReference>
<dbReference type="GO" id="GO:0006302">
    <property type="term" value="P:double-strand break repair"/>
    <property type="evidence" value="ECO:0007669"/>
    <property type="project" value="TreeGrafter"/>
</dbReference>
<dbReference type="GO" id="GO:0009432">
    <property type="term" value="P:SOS response"/>
    <property type="evidence" value="ECO:0007669"/>
    <property type="project" value="UniProtKB-UniRule"/>
</dbReference>
<dbReference type="Gene3D" id="3.40.50.300">
    <property type="entry name" value="P-loop containing nucleotide triphosphate hydrolases"/>
    <property type="match status" value="1"/>
</dbReference>
<dbReference type="Gene3D" id="1.20.1050.90">
    <property type="entry name" value="RecF/RecN/SMC, N-terminal domain"/>
    <property type="match status" value="1"/>
</dbReference>
<dbReference type="HAMAP" id="MF_00365">
    <property type="entry name" value="RecF"/>
    <property type="match status" value="1"/>
</dbReference>
<dbReference type="InterPro" id="IPR001238">
    <property type="entry name" value="DNA-binding_RecF"/>
</dbReference>
<dbReference type="InterPro" id="IPR018078">
    <property type="entry name" value="DNA-binding_RecF_CS"/>
</dbReference>
<dbReference type="InterPro" id="IPR027417">
    <property type="entry name" value="P-loop_NTPase"/>
</dbReference>
<dbReference type="InterPro" id="IPR003395">
    <property type="entry name" value="RecF/RecN/SMC_N"/>
</dbReference>
<dbReference type="InterPro" id="IPR042174">
    <property type="entry name" value="RecF_2"/>
</dbReference>
<dbReference type="NCBIfam" id="TIGR00611">
    <property type="entry name" value="recf"/>
    <property type="match status" value="1"/>
</dbReference>
<dbReference type="PANTHER" id="PTHR32182">
    <property type="entry name" value="DNA REPLICATION AND REPAIR PROTEIN RECF"/>
    <property type="match status" value="1"/>
</dbReference>
<dbReference type="PANTHER" id="PTHR32182:SF0">
    <property type="entry name" value="DNA REPLICATION AND REPAIR PROTEIN RECF"/>
    <property type="match status" value="1"/>
</dbReference>
<dbReference type="Pfam" id="PF02463">
    <property type="entry name" value="SMC_N"/>
    <property type="match status" value="1"/>
</dbReference>
<dbReference type="SUPFAM" id="SSF52540">
    <property type="entry name" value="P-loop containing nucleoside triphosphate hydrolases"/>
    <property type="match status" value="1"/>
</dbReference>
<dbReference type="PROSITE" id="PS00618">
    <property type="entry name" value="RECF_2"/>
    <property type="match status" value="1"/>
</dbReference>